<proteinExistence type="inferred from homology"/>
<dbReference type="EC" id="3.6.1.73" evidence="1"/>
<dbReference type="EMBL" id="CP000891">
    <property type="protein sequence ID" value="ABX50837.1"/>
    <property type="molecule type" value="Genomic_DNA"/>
</dbReference>
<dbReference type="SMR" id="A9L1P1"/>
<dbReference type="KEGG" id="sbn:Sbal195_3676"/>
<dbReference type="HOGENOM" id="CLU_087417_1_0_6"/>
<dbReference type="Proteomes" id="UP000000770">
    <property type="component" value="Chromosome"/>
</dbReference>
<dbReference type="GO" id="GO:0103023">
    <property type="term" value="F:ITPase activity"/>
    <property type="evidence" value="ECO:0007669"/>
    <property type="project" value="UniProtKB-EC"/>
</dbReference>
<dbReference type="GO" id="GO:0046872">
    <property type="term" value="F:metal ion binding"/>
    <property type="evidence" value="ECO:0007669"/>
    <property type="project" value="UniProtKB-KW"/>
</dbReference>
<dbReference type="GO" id="GO:0000166">
    <property type="term" value="F:nucleotide binding"/>
    <property type="evidence" value="ECO:0007669"/>
    <property type="project" value="UniProtKB-KW"/>
</dbReference>
<dbReference type="GO" id="GO:0017111">
    <property type="term" value="F:ribonucleoside triphosphate phosphatase activity"/>
    <property type="evidence" value="ECO:0000250"/>
    <property type="project" value="UniProtKB"/>
</dbReference>
<dbReference type="GO" id="GO:0009117">
    <property type="term" value="P:nucleotide metabolic process"/>
    <property type="evidence" value="ECO:0007669"/>
    <property type="project" value="UniProtKB-KW"/>
</dbReference>
<dbReference type="GO" id="GO:0006772">
    <property type="term" value="P:thiamine metabolic process"/>
    <property type="evidence" value="ECO:0007669"/>
    <property type="project" value="TreeGrafter"/>
</dbReference>
<dbReference type="FunFam" id="3.90.950.10:FF:000002">
    <property type="entry name" value="Inosine/xanthosine triphosphatase"/>
    <property type="match status" value="1"/>
</dbReference>
<dbReference type="Gene3D" id="3.90.950.10">
    <property type="match status" value="1"/>
</dbReference>
<dbReference type="HAMAP" id="MF_00648">
    <property type="entry name" value="Non_canon_purine_NTPase_YjjX"/>
    <property type="match status" value="1"/>
</dbReference>
<dbReference type="InterPro" id="IPR029001">
    <property type="entry name" value="ITPase-like_fam"/>
</dbReference>
<dbReference type="InterPro" id="IPR002786">
    <property type="entry name" value="Non_canon_purine_NTPase"/>
</dbReference>
<dbReference type="InterPro" id="IPR026533">
    <property type="entry name" value="NTPase/PRRC1"/>
</dbReference>
<dbReference type="InterPro" id="IPR050299">
    <property type="entry name" value="YjjX_NTPase"/>
</dbReference>
<dbReference type="NCBIfam" id="TIGR00258">
    <property type="entry name" value="inosine/xanthosine triphosphatase"/>
    <property type="match status" value="1"/>
</dbReference>
<dbReference type="NCBIfam" id="NF003459">
    <property type="entry name" value="PRK05074.1"/>
    <property type="match status" value="1"/>
</dbReference>
<dbReference type="PANTHER" id="PTHR34699">
    <property type="match status" value="1"/>
</dbReference>
<dbReference type="PANTHER" id="PTHR34699:SF2">
    <property type="entry name" value="NON-CANONICAL PURINE NTP PHOSPHATASE_PRRC1 DOMAIN-CONTAINING PROTEIN"/>
    <property type="match status" value="1"/>
</dbReference>
<dbReference type="Pfam" id="PF01931">
    <property type="entry name" value="NTPase_I-T"/>
    <property type="match status" value="1"/>
</dbReference>
<dbReference type="SUPFAM" id="SSF52972">
    <property type="entry name" value="ITPase-like"/>
    <property type="match status" value="1"/>
</dbReference>
<name>NCPP_SHEB9</name>
<comment type="function">
    <text evidence="1">Phosphatase that hydrolyzes non-canonical purine nucleotides such as XTP and ITP to their respective diphosphate derivatives. Probably excludes non-canonical purines from DNA/RNA precursor pool, thus preventing their incorporation into DNA/RNA and avoiding chromosomal lesions.</text>
</comment>
<comment type="catalytic activity">
    <reaction evidence="1">
        <text>XTP + H2O = XDP + phosphate + H(+)</text>
        <dbReference type="Rhea" id="RHEA:28406"/>
        <dbReference type="ChEBI" id="CHEBI:15377"/>
        <dbReference type="ChEBI" id="CHEBI:15378"/>
        <dbReference type="ChEBI" id="CHEBI:43474"/>
        <dbReference type="ChEBI" id="CHEBI:59884"/>
        <dbReference type="ChEBI" id="CHEBI:61314"/>
        <dbReference type="EC" id="3.6.1.73"/>
    </reaction>
</comment>
<comment type="catalytic activity">
    <reaction evidence="1">
        <text>ITP + H2O = IDP + phosphate + H(+)</text>
        <dbReference type="Rhea" id="RHEA:28330"/>
        <dbReference type="ChEBI" id="CHEBI:15377"/>
        <dbReference type="ChEBI" id="CHEBI:15378"/>
        <dbReference type="ChEBI" id="CHEBI:43474"/>
        <dbReference type="ChEBI" id="CHEBI:58280"/>
        <dbReference type="ChEBI" id="CHEBI:61402"/>
        <dbReference type="EC" id="3.6.1.73"/>
    </reaction>
</comment>
<comment type="cofactor">
    <cofactor evidence="1">
        <name>Mg(2+)</name>
        <dbReference type="ChEBI" id="CHEBI:18420"/>
    </cofactor>
    <cofactor evidence="1">
        <name>Mn(2+)</name>
        <dbReference type="ChEBI" id="CHEBI:29035"/>
    </cofactor>
    <text evidence="1">Binds 1 divalent metal cation per subunit; can use either Mg(2+) or Mn(2+).</text>
</comment>
<comment type="subunit">
    <text evidence="1">Homodimer.</text>
</comment>
<comment type="similarity">
    <text evidence="1">Belongs to the YjjX NTPase family.</text>
</comment>
<sequence length="186" mass="20242">MQQKIIKIKVGSKNPVKINAATKAMAQLFPESIIDASGMDAPSGVAAQPMTDKDTRQGAINRVHYCQQQDQQDTQADYYFAMEGGVDCFDFGPATFAYIAIGHKDQLAIGRSAILPLPMQVYRALEAGEELGHVMDRLFNTVNIKQKGGAIGLLTHGHATRESNYTQAIILAMAPLLNPDIYAQTC</sequence>
<organism>
    <name type="scientific">Shewanella baltica (strain OS195)</name>
    <dbReference type="NCBI Taxonomy" id="399599"/>
    <lineage>
        <taxon>Bacteria</taxon>
        <taxon>Pseudomonadati</taxon>
        <taxon>Pseudomonadota</taxon>
        <taxon>Gammaproteobacteria</taxon>
        <taxon>Alteromonadales</taxon>
        <taxon>Shewanellaceae</taxon>
        <taxon>Shewanella</taxon>
    </lineage>
</organism>
<protein>
    <recommendedName>
        <fullName evidence="1">Inosine/xanthosine triphosphatase</fullName>
        <shortName evidence="1">ITPase/XTPase</shortName>
        <ecNumber evidence="1">3.6.1.73</ecNumber>
    </recommendedName>
    <alternativeName>
        <fullName evidence="1">Non-canonical purine NTP phosphatase</fullName>
    </alternativeName>
    <alternativeName>
        <fullName evidence="1">Non-standard purine NTP phosphatase</fullName>
    </alternativeName>
    <alternativeName>
        <fullName evidence="1">Nucleoside-triphosphate phosphatase</fullName>
        <shortName evidence="1">NTPase</shortName>
    </alternativeName>
</protein>
<feature type="chain" id="PRO_1000082720" description="Inosine/xanthosine triphosphatase">
    <location>
        <begin position="1"/>
        <end position="186"/>
    </location>
</feature>
<feature type="binding site" evidence="1">
    <location>
        <position position="75"/>
    </location>
    <ligand>
        <name>Mg(2+)</name>
        <dbReference type="ChEBI" id="CHEBI:18420"/>
    </ligand>
</feature>
<keyword id="KW-0378">Hydrolase</keyword>
<keyword id="KW-0460">Magnesium</keyword>
<keyword id="KW-0464">Manganese</keyword>
<keyword id="KW-0479">Metal-binding</keyword>
<keyword id="KW-0546">Nucleotide metabolism</keyword>
<keyword id="KW-0547">Nucleotide-binding</keyword>
<accession>A9L1P1</accession>
<reference key="1">
    <citation type="submission" date="2007-11" db="EMBL/GenBank/DDBJ databases">
        <title>Complete sequence of chromosome of Shewanella baltica OS195.</title>
        <authorList>
            <consortium name="US DOE Joint Genome Institute"/>
            <person name="Copeland A."/>
            <person name="Lucas S."/>
            <person name="Lapidus A."/>
            <person name="Barry K."/>
            <person name="Glavina del Rio T."/>
            <person name="Dalin E."/>
            <person name="Tice H."/>
            <person name="Pitluck S."/>
            <person name="Chain P."/>
            <person name="Malfatti S."/>
            <person name="Shin M."/>
            <person name="Vergez L."/>
            <person name="Schmutz J."/>
            <person name="Larimer F."/>
            <person name="Land M."/>
            <person name="Hauser L."/>
            <person name="Kyrpides N."/>
            <person name="Kim E."/>
            <person name="Brettar I."/>
            <person name="Rodrigues J."/>
            <person name="Konstantinidis K."/>
            <person name="Klappenbach J."/>
            <person name="Hofle M."/>
            <person name="Tiedje J."/>
            <person name="Richardson P."/>
        </authorList>
    </citation>
    <scope>NUCLEOTIDE SEQUENCE [LARGE SCALE GENOMIC DNA]</scope>
    <source>
        <strain>OS195</strain>
    </source>
</reference>
<gene>
    <name type="ordered locus">Sbal195_3676</name>
</gene>
<evidence type="ECO:0000255" key="1">
    <source>
        <dbReference type="HAMAP-Rule" id="MF_00648"/>
    </source>
</evidence>